<sequence>MYIEMIDETGQVSAQMQEQITELLQFAAEKIGKQNKEMAVTFVDNKRVHEVNLEYRGIDRPTDVVSLEYKPESEIVFDEEDLLDNPELAEMMEDFDAYIGELYISIDKAREQAEDYGHSYEREMGFLAVHGFLHINGYDHYTPEEEAEMFGLQEEILTAYGLTRE</sequence>
<dbReference type="EC" id="3.1.-.-" evidence="1"/>
<dbReference type="EMBL" id="CP000408">
    <property type="protein sequence ID" value="ABP92570.1"/>
    <property type="molecule type" value="Genomic_DNA"/>
</dbReference>
<dbReference type="SMR" id="A4W2I1"/>
<dbReference type="KEGG" id="ssv:SSU98_1412"/>
<dbReference type="HOGENOM" id="CLU_106710_3_0_9"/>
<dbReference type="GO" id="GO:0005737">
    <property type="term" value="C:cytoplasm"/>
    <property type="evidence" value="ECO:0007669"/>
    <property type="project" value="UniProtKB-SubCell"/>
</dbReference>
<dbReference type="GO" id="GO:0004222">
    <property type="term" value="F:metalloendopeptidase activity"/>
    <property type="evidence" value="ECO:0007669"/>
    <property type="project" value="InterPro"/>
</dbReference>
<dbReference type="GO" id="GO:0004521">
    <property type="term" value="F:RNA endonuclease activity"/>
    <property type="evidence" value="ECO:0007669"/>
    <property type="project" value="UniProtKB-UniRule"/>
</dbReference>
<dbReference type="GO" id="GO:0008270">
    <property type="term" value="F:zinc ion binding"/>
    <property type="evidence" value="ECO:0007669"/>
    <property type="project" value="UniProtKB-UniRule"/>
</dbReference>
<dbReference type="GO" id="GO:0006364">
    <property type="term" value="P:rRNA processing"/>
    <property type="evidence" value="ECO:0007669"/>
    <property type="project" value="UniProtKB-UniRule"/>
</dbReference>
<dbReference type="Gene3D" id="3.40.390.30">
    <property type="entry name" value="Metalloproteases ('zincins'), catalytic domain"/>
    <property type="match status" value="1"/>
</dbReference>
<dbReference type="HAMAP" id="MF_00009">
    <property type="entry name" value="Endoribonucl_YbeY"/>
    <property type="match status" value="1"/>
</dbReference>
<dbReference type="InterPro" id="IPR023091">
    <property type="entry name" value="MetalPrtase_cat_dom_sf_prd"/>
</dbReference>
<dbReference type="InterPro" id="IPR002036">
    <property type="entry name" value="YbeY"/>
</dbReference>
<dbReference type="InterPro" id="IPR020549">
    <property type="entry name" value="YbeY_CS"/>
</dbReference>
<dbReference type="NCBIfam" id="TIGR00043">
    <property type="entry name" value="rRNA maturation RNase YbeY"/>
    <property type="match status" value="1"/>
</dbReference>
<dbReference type="PANTHER" id="PTHR46986">
    <property type="entry name" value="ENDORIBONUCLEASE YBEY, CHLOROPLASTIC"/>
    <property type="match status" value="1"/>
</dbReference>
<dbReference type="PANTHER" id="PTHR46986:SF1">
    <property type="entry name" value="ENDORIBONUCLEASE YBEY, CHLOROPLASTIC"/>
    <property type="match status" value="1"/>
</dbReference>
<dbReference type="Pfam" id="PF02130">
    <property type="entry name" value="YbeY"/>
    <property type="match status" value="1"/>
</dbReference>
<dbReference type="SUPFAM" id="SSF55486">
    <property type="entry name" value="Metalloproteases ('zincins'), catalytic domain"/>
    <property type="match status" value="1"/>
</dbReference>
<dbReference type="PROSITE" id="PS01306">
    <property type="entry name" value="UPF0054"/>
    <property type="match status" value="1"/>
</dbReference>
<evidence type="ECO:0000255" key="1">
    <source>
        <dbReference type="HAMAP-Rule" id="MF_00009"/>
    </source>
</evidence>
<keyword id="KW-0963">Cytoplasm</keyword>
<keyword id="KW-0255">Endonuclease</keyword>
<keyword id="KW-0378">Hydrolase</keyword>
<keyword id="KW-0479">Metal-binding</keyword>
<keyword id="KW-0540">Nuclease</keyword>
<keyword id="KW-0690">Ribosome biogenesis</keyword>
<keyword id="KW-0698">rRNA processing</keyword>
<keyword id="KW-0862">Zinc</keyword>
<gene>
    <name evidence="1" type="primary">ybeY</name>
    <name type="ordered locus">SSU98_1412</name>
</gene>
<proteinExistence type="inferred from homology"/>
<name>YBEY_STRS2</name>
<comment type="function">
    <text evidence="1">Single strand-specific metallo-endoribonuclease involved in late-stage 70S ribosome quality control and in maturation of the 3' terminus of the 16S rRNA.</text>
</comment>
<comment type="cofactor">
    <cofactor evidence="1">
        <name>Zn(2+)</name>
        <dbReference type="ChEBI" id="CHEBI:29105"/>
    </cofactor>
    <text evidence="1">Binds 1 zinc ion.</text>
</comment>
<comment type="subcellular location">
    <subcellularLocation>
        <location evidence="1">Cytoplasm</location>
    </subcellularLocation>
</comment>
<comment type="similarity">
    <text evidence="1">Belongs to the endoribonuclease YbeY family.</text>
</comment>
<protein>
    <recommendedName>
        <fullName evidence="1">Endoribonuclease YbeY</fullName>
        <ecNumber evidence="1">3.1.-.-</ecNumber>
    </recommendedName>
</protein>
<feature type="chain" id="PRO_1000000748" description="Endoribonuclease YbeY">
    <location>
        <begin position="1"/>
        <end position="165"/>
    </location>
</feature>
<feature type="binding site" evidence="1">
    <location>
        <position position="130"/>
    </location>
    <ligand>
        <name>Zn(2+)</name>
        <dbReference type="ChEBI" id="CHEBI:29105"/>
        <note>catalytic</note>
    </ligand>
</feature>
<feature type="binding site" evidence="1">
    <location>
        <position position="134"/>
    </location>
    <ligand>
        <name>Zn(2+)</name>
        <dbReference type="ChEBI" id="CHEBI:29105"/>
        <note>catalytic</note>
    </ligand>
</feature>
<feature type="binding site" evidence="1">
    <location>
        <position position="140"/>
    </location>
    <ligand>
        <name>Zn(2+)</name>
        <dbReference type="ChEBI" id="CHEBI:29105"/>
        <note>catalytic</note>
    </ligand>
</feature>
<organism>
    <name type="scientific">Streptococcus suis (strain 98HAH33)</name>
    <dbReference type="NCBI Taxonomy" id="391296"/>
    <lineage>
        <taxon>Bacteria</taxon>
        <taxon>Bacillati</taxon>
        <taxon>Bacillota</taxon>
        <taxon>Bacilli</taxon>
        <taxon>Lactobacillales</taxon>
        <taxon>Streptococcaceae</taxon>
        <taxon>Streptococcus</taxon>
    </lineage>
</organism>
<accession>A4W2I1</accession>
<reference key="1">
    <citation type="journal article" date="2007" name="PLoS ONE">
        <title>A glimpse of streptococcal toxic shock syndrome from comparative genomics of S. suis 2 Chinese isolates.</title>
        <authorList>
            <person name="Chen C."/>
            <person name="Tang J."/>
            <person name="Dong W."/>
            <person name="Wang C."/>
            <person name="Feng Y."/>
            <person name="Wang J."/>
            <person name="Zheng F."/>
            <person name="Pan X."/>
            <person name="Liu D."/>
            <person name="Li M."/>
            <person name="Song Y."/>
            <person name="Zhu X."/>
            <person name="Sun H."/>
            <person name="Feng T."/>
            <person name="Guo Z."/>
            <person name="Ju A."/>
            <person name="Ge J."/>
            <person name="Dong Y."/>
            <person name="Sun W."/>
            <person name="Jiang Y."/>
            <person name="Wang J."/>
            <person name="Yan J."/>
            <person name="Yang H."/>
            <person name="Wang X."/>
            <person name="Gao G.F."/>
            <person name="Yang R."/>
            <person name="Wang J."/>
            <person name="Yu J."/>
        </authorList>
    </citation>
    <scope>NUCLEOTIDE SEQUENCE [LARGE SCALE GENOMIC DNA]</scope>
    <source>
        <strain>98HAH33</strain>
    </source>
</reference>